<proteinExistence type="inferred from homology"/>
<organism>
    <name type="scientific">Methanothermobacter thermautotrophicus (strain ATCC 29096 / DSM 1053 / JCM 10044 / NBRC 100330 / Delta H)</name>
    <name type="common">Methanobacterium thermoautotrophicum</name>
    <dbReference type="NCBI Taxonomy" id="187420"/>
    <lineage>
        <taxon>Archaea</taxon>
        <taxon>Methanobacteriati</taxon>
        <taxon>Methanobacteriota</taxon>
        <taxon>Methanomada group</taxon>
        <taxon>Methanobacteria</taxon>
        <taxon>Methanobacteriales</taxon>
        <taxon>Methanobacteriaceae</taxon>
        <taxon>Methanothermobacter</taxon>
    </lineage>
</organism>
<gene>
    <name evidence="1" type="primary">thi4</name>
    <name type="ordered locus">MTH_1620</name>
</gene>
<accession>O27657</accession>
<dbReference type="EC" id="2.4.2.59" evidence="1"/>
<dbReference type="EMBL" id="AE000666">
    <property type="protein sequence ID" value="AAB86093.1"/>
    <property type="status" value="ALT_INIT"/>
    <property type="molecule type" value="Genomic_DNA"/>
</dbReference>
<dbReference type="PIR" id="E69083">
    <property type="entry name" value="E69083"/>
</dbReference>
<dbReference type="RefSeq" id="WP_048061316.1">
    <property type="nucleotide sequence ID" value="NC_000916.1"/>
</dbReference>
<dbReference type="SMR" id="O27657"/>
<dbReference type="FunCoup" id="O27657">
    <property type="interactions" value="108"/>
</dbReference>
<dbReference type="STRING" id="187420.MTH_1620"/>
<dbReference type="PaxDb" id="187420-MTH_1620"/>
<dbReference type="EnsemblBacteria" id="AAB86093">
    <property type="protein sequence ID" value="AAB86093"/>
    <property type="gene ID" value="MTH_1620"/>
</dbReference>
<dbReference type="KEGG" id="mth:MTH_1620"/>
<dbReference type="PATRIC" id="fig|187420.15.peg.1584"/>
<dbReference type="HOGENOM" id="CLU_053727_2_0_2"/>
<dbReference type="InParanoid" id="O27657"/>
<dbReference type="UniPathway" id="UPA00060"/>
<dbReference type="Proteomes" id="UP000005223">
    <property type="component" value="Chromosome"/>
</dbReference>
<dbReference type="GO" id="GO:0005506">
    <property type="term" value="F:iron ion binding"/>
    <property type="evidence" value="ECO:0007669"/>
    <property type="project" value="UniProtKB-UniRule"/>
</dbReference>
<dbReference type="GO" id="GO:0016763">
    <property type="term" value="F:pentosyltransferase activity"/>
    <property type="evidence" value="ECO:0007669"/>
    <property type="project" value="UniProtKB-UniRule"/>
</dbReference>
<dbReference type="GO" id="GO:0009228">
    <property type="term" value="P:thiamine biosynthetic process"/>
    <property type="evidence" value="ECO:0007669"/>
    <property type="project" value="UniProtKB-KW"/>
</dbReference>
<dbReference type="GO" id="GO:0009229">
    <property type="term" value="P:thiamine diphosphate biosynthetic process"/>
    <property type="evidence" value="ECO:0007669"/>
    <property type="project" value="UniProtKB-UniRule"/>
</dbReference>
<dbReference type="GO" id="GO:0052837">
    <property type="term" value="P:thiazole biosynthetic process"/>
    <property type="evidence" value="ECO:0007669"/>
    <property type="project" value="UniProtKB-UniRule"/>
</dbReference>
<dbReference type="Gene3D" id="3.50.50.60">
    <property type="entry name" value="FAD/NAD(P)-binding domain"/>
    <property type="match status" value="1"/>
</dbReference>
<dbReference type="HAMAP" id="MF_00304">
    <property type="entry name" value="Thi4"/>
    <property type="match status" value="1"/>
</dbReference>
<dbReference type="InterPro" id="IPR036188">
    <property type="entry name" value="FAD/NAD-bd_sf"/>
</dbReference>
<dbReference type="InterPro" id="IPR002922">
    <property type="entry name" value="Thi4_fam"/>
</dbReference>
<dbReference type="InterPro" id="IPR022828">
    <property type="entry name" value="Thi4_prok"/>
</dbReference>
<dbReference type="NCBIfam" id="TIGR00292">
    <property type="entry name" value="sulfide-dependent adenosine diphosphate thiazole synthase"/>
    <property type="match status" value="1"/>
</dbReference>
<dbReference type="PANTHER" id="PTHR43422">
    <property type="entry name" value="THIAMINE THIAZOLE SYNTHASE"/>
    <property type="match status" value="1"/>
</dbReference>
<dbReference type="PANTHER" id="PTHR43422:SF3">
    <property type="entry name" value="THIAMINE THIAZOLE SYNTHASE"/>
    <property type="match status" value="1"/>
</dbReference>
<dbReference type="Pfam" id="PF01946">
    <property type="entry name" value="Thi4"/>
    <property type="match status" value="1"/>
</dbReference>
<dbReference type="PRINTS" id="PR00419">
    <property type="entry name" value="ADXRDTASE"/>
</dbReference>
<dbReference type="SUPFAM" id="SSF51905">
    <property type="entry name" value="FAD/NAD(P)-binding domain"/>
    <property type="match status" value="1"/>
</dbReference>
<name>THI4_METTH</name>
<evidence type="ECO:0000255" key="1">
    <source>
        <dbReference type="HAMAP-Rule" id="MF_00304"/>
    </source>
</evidence>
<evidence type="ECO:0000305" key="2"/>
<reference key="1">
    <citation type="journal article" date="1997" name="J. Bacteriol.">
        <title>Complete genome sequence of Methanobacterium thermoautotrophicum deltaH: functional analysis and comparative genomics.</title>
        <authorList>
            <person name="Smith D.R."/>
            <person name="Doucette-Stamm L.A."/>
            <person name="Deloughery C."/>
            <person name="Lee H.-M."/>
            <person name="Dubois J."/>
            <person name="Aldredge T."/>
            <person name="Bashirzadeh R."/>
            <person name="Blakely D."/>
            <person name="Cook R."/>
            <person name="Gilbert K."/>
            <person name="Harrison D."/>
            <person name="Hoang L."/>
            <person name="Keagle P."/>
            <person name="Lumm W."/>
            <person name="Pothier B."/>
            <person name="Qiu D."/>
            <person name="Spadafora R."/>
            <person name="Vicare R."/>
            <person name="Wang Y."/>
            <person name="Wierzbowski J."/>
            <person name="Gibson R."/>
            <person name="Jiwani N."/>
            <person name="Caruso A."/>
            <person name="Bush D."/>
            <person name="Safer H."/>
            <person name="Patwell D."/>
            <person name="Prabhakar S."/>
            <person name="McDougall S."/>
            <person name="Shimer G."/>
            <person name="Goyal A."/>
            <person name="Pietrovski S."/>
            <person name="Church G.M."/>
            <person name="Daniels C.J."/>
            <person name="Mao J.-I."/>
            <person name="Rice P."/>
            <person name="Noelling J."/>
            <person name="Reeve J.N."/>
        </authorList>
    </citation>
    <scope>NUCLEOTIDE SEQUENCE [LARGE SCALE GENOMIC DNA]</scope>
    <source>
        <strain>ATCC 29096 / DSM 1053 / JCM 10044 / NBRC 100330 / Delta H</strain>
    </source>
</reference>
<sequence>MKLDDIKISRAIVEGYMEDLLDYMEMDVAIGGGGPSGLTAGYYLARAGLKVALFERKLSIGGGMWGGGMMFNKIVVQDEGREILDEFGIRSEPYDEGYHVADSVEATSTLCSRACQAGLKIFNLMSIEDVMIRDEGITGLVLNWSSVEMAGLHVDPLTVRARAVIDATGHDCEIVKVVERKIGPELNTPDGRIQGERSMWADVGEAALIENTREVYPNLYVAGMASNAVYGAPRMGPIFGGMLVSGRRVAEMIIEKLK</sequence>
<feature type="chain" id="PRO_0000153950" description="Thiamine thiazole synthase">
    <location>
        <begin position="1"/>
        <end position="258"/>
    </location>
</feature>
<feature type="binding site" description="in other chain" evidence="1">
    <location>
        <position position="36"/>
    </location>
    <ligand>
        <name>NAD(+)</name>
        <dbReference type="ChEBI" id="CHEBI:57540"/>
        <note>ligand shared between two adjacent protomers</note>
    </ligand>
</feature>
<feature type="binding site" description="in other chain" evidence="1">
    <location>
        <begin position="55"/>
        <end position="56"/>
    </location>
    <ligand>
        <name>NAD(+)</name>
        <dbReference type="ChEBI" id="CHEBI:57540"/>
        <note>ligand shared between two adjacent protomers</note>
    </ligand>
</feature>
<feature type="binding site" description="in other chain" evidence="1">
    <location>
        <position position="63"/>
    </location>
    <ligand>
        <name>NAD(+)</name>
        <dbReference type="ChEBI" id="CHEBI:57540"/>
        <note>ligand shared between two adjacent protomers</note>
    </ligand>
</feature>
<feature type="binding site" description="in other chain" evidence="1">
    <location>
        <position position="127"/>
    </location>
    <ligand>
        <name>NAD(+)</name>
        <dbReference type="ChEBI" id="CHEBI:57540"/>
        <note>ligand shared between two adjacent protomers</note>
    </ligand>
</feature>
<feature type="binding site" evidence="1">
    <location>
        <begin position="153"/>
        <end position="155"/>
    </location>
    <ligand>
        <name>NAD(+)</name>
        <dbReference type="ChEBI" id="CHEBI:57540"/>
        <note>ligand shared between two adjacent protomers</note>
    </ligand>
</feature>
<feature type="binding site" evidence="1">
    <location>
        <position position="155"/>
    </location>
    <ligand>
        <name>Fe cation</name>
        <dbReference type="ChEBI" id="CHEBI:24875"/>
        <note>ligand shared between two adjacent protomers</note>
    </ligand>
</feature>
<feature type="binding site" description="in other chain" evidence="1">
    <location>
        <position position="170"/>
    </location>
    <ligand>
        <name>Fe cation</name>
        <dbReference type="ChEBI" id="CHEBI:24875"/>
        <note>ligand shared between two adjacent protomers</note>
    </ligand>
</feature>
<feature type="binding site" description="in other chain" evidence="1">
    <location>
        <position position="224"/>
    </location>
    <ligand>
        <name>NAD(+)</name>
        <dbReference type="ChEBI" id="CHEBI:57540"/>
        <note>ligand shared between two adjacent protomers</note>
    </ligand>
</feature>
<feature type="binding site" evidence="1">
    <location>
        <position position="234"/>
    </location>
    <ligand>
        <name>glycine</name>
        <dbReference type="ChEBI" id="CHEBI:57305"/>
    </ligand>
</feature>
<protein>
    <recommendedName>
        <fullName evidence="1">Thiamine thiazole synthase</fullName>
        <ecNumber evidence="1">2.4.2.59</ecNumber>
    </recommendedName>
</protein>
<comment type="function">
    <text evidence="1">Involved in the biosynthesis of the thiazole moiety of thiamine. Catalyzes the conversion of NAD and glycine to adenosine diphosphate 5-(2-hydroxyethyl)-4-methylthiazole-2-carboxylate (ADT), an adenylated thiazole intermediate, using free sulfide as a source of sulfur.</text>
</comment>
<comment type="catalytic activity">
    <reaction evidence="1">
        <text>hydrogen sulfide + glycine + NAD(+) = ADP-5-ethyl-4-methylthiazole-2-carboxylate + nicotinamide + 3 H2O + H(+)</text>
        <dbReference type="Rhea" id="RHEA:55704"/>
        <dbReference type="ChEBI" id="CHEBI:15377"/>
        <dbReference type="ChEBI" id="CHEBI:15378"/>
        <dbReference type="ChEBI" id="CHEBI:17154"/>
        <dbReference type="ChEBI" id="CHEBI:29919"/>
        <dbReference type="ChEBI" id="CHEBI:57305"/>
        <dbReference type="ChEBI" id="CHEBI:57540"/>
        <dbReference type="ChEBI" id="CHEBI:139151"/>
        <dbReference type="EC" id="2.4.2.59"/>
    </reaction>
</comment>
<comment type="cofactor">
    <cofactor evidence="1">
        <name>Fe(2+)</name>
        <dbReference type="ChEBI" id="CHEBI:29033"/>
    </cofactor>
</comment>
<comment type="pathway">
    <text evidence="1">Cofactor biosynthesis; thiamine diphosphate biosynthesis.</text>
</comment>
<comment type="subunit">
    <text evidence="1">Homooctamer; tetramer of dimers.</text>
</comment>
<comment type="similarity">
    <text evidence="1">Belongs to the THI4 family.</text>
</comment>
<comment type="sequence caution" evidence="2">
    <conflict type="erroneous initiation">
        <sequence resource="EMBL-CDS" id="AAB86093"/>
    </conflict>
</comment>
<keyword id="KW-0408">Iron</keyword>
<keyword id="KW-0479">Metal-binding</keyword>
<keyword id="KW-0520">NAD</keyword>
<keyword id="KW-1185">Reference proteome</keyword>
<keyword id="KW-0784">Thiamine biosynthesis</keyword>
<keyword id="KW-0808">Transferase</keyword>